<gene>
    <name evidence="2" type="primary">mutM</name>
    <name evidence="2" type="synonym">fpg</name>
    <name type="ordered locus">ABO_2583</name>
</gene>
<evidence type="ECO:0000250" key="1"/>
<evidence type="ECO:0000255" key="2">
    <source>
        <dbReference type="HAMAP-Rule" id="MF_00103"/>
    </source>
</evidence>
<keyword id="KW-0227">DNA damage</keyword>
<keyword id="KW-0234">DNA repair</keyword>
<keyword id="KW-0238">DNA-binding</keyword>
<keyword id="KW-0326">Glycosidase</keyword>
<keyword id="KW-0378">Hydrolase</keyword>
<keyword id="KW-0456">Lyase</keyword>
<keyword id="KW-0479">Metal-binding</keyword>
<keyword id="KW-0511">Multifunctional enzyme</keyword>
<keyword id="KW-1185">Reference proteome</keyword>
<keyword id="KW-0862">Zinc</keyword>
<keyword id="KW-0863">Zinc-finger</keyword>
<sequence length="269" mass="29903">MPELPEVETTLRGIRPHLQGRILKSVTVREPRLRWPVSEAIYALRDCPVVALRRRAKYLLIELEHGQLLIHLGMSGTLRVVDMDLPLRKHDHVDLLLDSGKVLRFNDPRRFGSVLFQGGDQPHSLLQSLGPEPLSDSFNGQWLFARSRGRKVAVKSFIMDNATVVGVGNIYAQESLFMAGIHPSRAAGRISLARYQALAEAIKRVLAQAIEAGGTTLKDFTRADGQPGYFAQSLNVYGRAGQPCVQCDAILKADRHGQRSTAYCPQCQR</sequence>
<dbReference type="EC" id="3.2.2.23" evidence="2"/>
<dbReference type="EC" id="4.2.99.18" evidence="2"/>
<dbReference type="EMBL" id="AM286690">
    <property type="protein sequence ID" value="CAL18031.1"/>
    <property type="molecule type" value="Genomic_DNA"/>
</dbReference>
<dbReference type="RefSeq" id="WP_011589854.1">
    <property type="nucleotide sequence ID" value="NC_008260.1"/>
</dbReference>
<dbReference type="SMR" id="Q0VLB7"/>
<dbReference type="STRING" id="393595.ABO_2583"/>
<dbReference type="KEGG" id="abo:ABO_2583"/>
<dbReference type="eggNOG" id="COG0266">
    <property type="taxonomic scope" value="Bacteria"/>
</dbReference>
<dbReference type="HOGENOM" id="CLU_038423_1_1_6"/>
<dbReference type="OrthoDB" id="9800855at2"/>
<dbReference type="Proteomes" id="UP000008871">
    <property type="component" value="Chromosome"/>
</dbReference>
<dbReference type="GO" id="GO:0034039">
    <property type="term" value="F:8-oxo-7,8-dihydroguanine DNA N-glycosylase activity"/>
    <property type="evidence" value="ECO:0007669"/>
    <property type="project" value="TreeGrafter"/>
</dbReference>
<dbReference type="GO" id="GO:0140078">
    <property type="term" value="F:class I DNA-(apurinic or apyrimidinic site) endonuclease activity"/>
    <property type="evidence" value="ECO:0007669"/>
    <property type="project" value="UniProtKB-EC"/>
</dbReference>
<dbReference type="GO" id="GO:0003684">
    <property type="term" value="F:damaged DNA binding"/>
    <property type="evidence" value="ECO:0007669"/>
    <property type="project" value="InterPro"/>
</dbReference>
<dbReference type="GO" id="GO:0008270">
    <property type="term" value="F:zinc ion binding"/>
    <property type="evidence" value="ECO:0007669"/>
    <property type="project" value="UniProtKB-UniRule"/>
</dbReference>
<dbReference type="GO" id="GO:0006284">
    <property type="term" value="P:base-excision repair"/>
    <property type="evidence" value="ECO:0007669"/>
    <property type="project" value="InterPro"/>
</dbReference>
<dbReference type="CDD" id="cd08966">
    <property type="entry name" value="EcFpg-like_N"/>
    <property type="match status" value="1"/>
</dbReference>
<dbReference type="FunFam" id="1.10.8.50:FF:000003">
    <property type="entry name" value="Formamidopyrimidine-DNA glycosylase"/>
    <property type="match status" value="1"/>
</dbReference>
<dbReference type="FunFam" id="3.20.190.10:FF:000001">
    <property type="entry name" value="Formamidopyrimidine-DNA glycosylase"/>
    <property type="match status" value="1"/>
</dbReference>
<dbReference type="Gene3D" id="1.10.8.50">
    <property type="match status" value="1"/>
</dbReference>
<dbReference type="Gene3D" id="3.20.190.10">
    <property type="entry name" value="MutM-like, N-terminal"/>
    <property type="match status" value="1"/>
</dbReference>
<dbReference type="HAMAP" id="MF_00103">
    <property type="entry name" value="Fapy_DNA_glycosyl"/>
    <property type="match status" value="1"/>
</dbReference>
<dbReference type="InterPro" id="IPR015886">
    <property type="entry name" value="DNA_glyclase/AP_lyase_DNA-bd"/>
</dbReference>
<dbReference type="InterPro" id="IPR020629">
    <property type="entry name" value="Formamido-pyr_DNA_Glyclase"/>
</dbReference>
<dbReference type="InterPro" id="IPR012319">
    <property type="entry name" value="FPG_cat"/>
</dbReference>
<dbReference type="InterPro" id="IPR035937">
    <property type="entry name" value="MutM-like_N-ter"/>
</dbReference>
<dbReference type="InterPro" id="IPR010979">
    <property type="entry name" value="Ribosomal_uS13-like_H2TH"/>
</dbReference>
<dbReference type="InterPro" id="IPR000214">
    <property type="entry name" value="Znf_DNA_glyclase/AP_lyase"/>
</dbReference>
<dbReference type="InterPro" id="IPR010663">
    <property type="entry name" value="Znf_FPG/IleRS"/>
</dbReference>
<dbReference type="NCBIfam" id="TIGR00577">
    <property type="entry name" value="fpg"/>
    <property type="match status" value="1"/>
</dbReference>
<dbReference type="NCBIfam" id="NF002211">
    <property type="entry name" value="PRK01103.1"/>
    <property type="match status" value="1"/>
</dbReference>
<dbReference type="PANTHER" id="PTHR22993">
    <property type="entry name" value="FORMAMIDOPYRIMIDINE-DNA GLYCOSYLASE"/>
    <property type="match status" value="1"/>
</dbReference>
<dbReference type="PANTHER" id="PTHR22993:SF9">
    <property type="entry name" value="FORMAMIDOPYRIMIDINE-DNA GLYCOSYLASE"/>
    <property type="match status" value="1"/>
</dbReference>
<dbReference type="Pfam" id="PF01149">
    <property type="entry name" value="Fapy_DNA_glyco"/>
    <property type="match status" value="1"/>
</dbReference>
<dbReference type="Pfam" id="PF06831">
    <property type="entry name" value="H2TH"/>
    <property type="match status" value="1"/>
</dbReference>
<dbReference type="Pfam" id="PF06827">
    <property type="entry name" value="zf-FPG_IleRS"/>
    <property type="match status" value="1"/>
</dbReference>
<dbReference type="SMART" id="SM00898">
    <property type="entry name" value="Fapy_DNA_glyco"/>
    <property type="match status" value="1"/>
</dbReference>
<dbReference type="SMART" id="SM01232">
    <property type="entry name" value="H2TH"/>
    <property type="match status" value="1"/>
</dbReference>
<dbReference type="SUPFAM" id="SSF57716">
    <property type="entry name" value="Glucocorticoid receptor-like (DNA-binding domain)"/>
    <property type="match status" value="1"/>
</dbReference>
<dbReference type="SUPFAM" id="SSF81624">
    <property type="entry name" value="N-terminal domain of MutM-like DNA repair proteins"/>
    <property type="match status" value="1"/>
</dbReference>
<dbReference type="SUPFAM" id="SSF46946">
    <property type="entry name" value="S13-like H2TH domain"/>
    <property type="match status" value="1"/>
</dbReference>
<dbReference type="PROSITE" id="PS51068">
    <property type="entry name" value="FPG_CAT"/>
    <property type="match status" value="1"/>
</dbReference>
<dbReference type="PROSITE" id="PS51066">
    <property type="entry name" value="ZF_FPG_2"/>
    <property type="match status" value="1"/>
</dbReference>
<comment type="function">
    <text evidence="2">Involved in base excision repair of DNA damaged by oxidation or by mutagenic agents. Acts as a DNA glycosylase that recognizes and removes damaged bases. Has a preference for oxidized purines, such as 7,8-dihydro-8-oxoguanine (8-oxoG). Has AP (apurinic/apyrimidinic) lyase activity and introduces nicks in the DNA strand. Cleaves the DNA backbone by beta-delta elimination to generate a single-strand break at the site of the removed base with both 3'- and 5'-phosphates.</text>
</comment>
<comment type="catalytic activity">
    <reaction evidence="2">
        <text>Hydrolysis of DNA containing ring-opened 7-methylguanine residues, releasing 2,6-diamino-4-hydroxy-5-(N-methyl)formamidopyrimidine.</text>
        <dbReference type="EC" id="3.2.2.23"/>
    </reaction>
</comment>
<comment type="catalytic activity">
    <reaction evidence="2">
        <text>2'-deoxyribonucleotide-(2'-deoxyribose 5'-phosphate)-2'-deoxyribonucleotide-DNA = a 3'-end 2'-deoxyribonucleotide-(2,3-dehydro-2,3-deoxyribose 5'-phosphate)-DNA + a 5'-end 5'-phospho-2'-deoxyribonucleoside-DNA + H(+)</text>
        <dbReference type="Rhea" id="RHEA:66592"/>
        <dbReference type="Rhea" id="RHEA-COMP:13180"/>
        <dbReference type="Rhea" id="RHEA-COMP:16897"/>
        <dbReference type="Rhea" id="RHEA-COMP:17067"/>
        <dbReference type="ChEBI" id="CHEBI:15378"/>
        <dbReference type="ChEBI" id="CHEBI:136412"/>
        <dbReference type="ChEBI" id="CHEBI:157695"/>
        <dbReference type="ChEBI" id="CHEBI:167181"/>
        <dbReference type="EC" id="4.2.99.18"/>
    </reaction>
</comment>
<comment type="cofactor">
    <cofactor evidence="2">
        <name>Zn(2+)</name>
        <dbReference type="ChEBI" id="CHEBI:29105"/>
    </cofactor>
    <text evidence="2">Binds 1 zinc ion per subunit.</text>
</comment>
<comment type="subunit">
    <text evidence="2">Monomer.</text>
</comment>
<comment type="similarity">
    <text evidence="2">Belongs to the FPG family.</text>
</comment>
<feature type="initiator methionine" description="Removed" evidence="1">
    <location>
        <position position="1"/>
    </location>
</feature>
<feature type="chain" id="PRO_1000008672" description="Formamidopyrimidine-DNA glycosylase">
    <location>
        <begin position="2"/>
        <end position="269"/>
    </location>
</feature>
<feature type="zinc finger region" description="FPG-type" evidence="2">
    <location>
        <begin position="235"/>
        <end position="269"/>
    </location>
</feature>
<feature type="active site" description="Schiff-base intermediate with DNA" evidence="2">
    <location>
        <position position="2"/>
    </location>
</feature>
<feature type="active site" description="Proton donor" evidence="2">
    <location>
        <position position="3"/>
    </location>
</feature>
<feature type="active site" description="Proton donor; for beta-elimination activity" evidence="2">
    <location>
        <position position="57"/>
    </location>
</feature>
<feature type="active site" description="Proton donor; for delta-elimination activity" evidence="2">
    <location>
        <position position="259"/>
    </location>
</feature>
<feature type="binding site" evidence="2">
    <location>
        <position position="90"/>
    </location>
    <ligand>
        <name>DNA</name>
        <dbReference type="ChEBI" id="CHEBI:16991"/>
    </ligand>
</feature>
<feature type="binding site" evidence="2">
    <location>
        <position position="109"/>
    </location>
    <ligand>
        <name>DNA</name>
        <dbReference type="ChEBI" id="CHEBI:16991"/>
    </ligand>
</feature>
<feature type="binding site" evidence="2">
    <location>
        <position position="150"/>
    </location>
    <ligand>
        <name>DNA</name>
        <dbReference type="ChEBI" id="CHEBI:16991"/>
    </ligand>
</feature>
<organism>
    <name type="scientific">Alcanivorax borkumensis (strain ATCC 700651 / DSM 11573 / NCIMB 13689 / SK2)</name>
    <dbReference type="NCBI Taxonomy" id="393595"/>
    <lineage>
        <taxon>Bacteria</taxon>
        <taxon>Pseudomonadati</taxon>
        <taxon>Pseudomonadota</taxon>
        <taxon>Gammaproteobacteria</taxon>
        <taxon>Oceanospirillales</taxon>
        <taxon>Alcanivoracaceae</taxon>
        <taxon>Alcanivorax</taxon>
    </lineage>
</organism>
<reference key="1">
    <citation type="journal article" date="2006" name="Nat. Biotechnol.">
        <title>Genome sequence of the ubiquitous hydrocarbon-degrading marine bacterium Alcanivorax borkumensis.</title>
        <authorList>
            <person name="Schneiker S."/>
            <person name="Martins dos Santos V.A.P."/>
            <person name="Bartels D."/>
            <person name="Bekel T."/>
            <person name="Brecht M."/>
            <person name="Buhrmester J."/>
            <person name="Chernikova T.N."/>
            <person name="Denaro R."/>
            <person name="Ferrer M."/>
            <person name="Gertler C."/>
            <person name="Goesmann A."/>
            <person name="Golyshina O.V."/>
            <person name="Kaminski F."/>
            <person name="Khachane A.N."/>
            <person name="Lang S."/>
            <person name="Linke B."/>
            <person name="McHardy A.C."/>
            <person name="Meyer F."/>
            <person name="Nechitaylo T."/>
            <person name="Puehler A."/>
            <person name="Regenhardt D."/>
            <person name="Rupp O."/>
            <person name="Sabirova J.S."/>
            <person name="Selbitschka W."/>
            <person name="Yakimov M.M."/>
            <person name="Timmis K.N."/>
            <person name="Vorhoelter F.-J."/>
            <person name="Weidner S."/>
            <person name="Kaiser O."/>
            <person name="Golyshin P.N."/>
        </authorList>
    </citation>
    <scope>NUCLEOTIDE SEQUENCE [LARGE SCALE GENOMIC DNA]</scope>
    <source>
        <strain>ATCC 700651 / DSM 11573 / NCIMB 13689 / SK2</strain>
    </source>
</reference>
<protein>
    <recommendedName>
        <fullName evidence="2">Formamidopyrimidine-DNA glycosylase</fullName>
        <shortName evidence="2">Fapy-DNA glycosylase</shortName>
        <ecNumber evidence="2">3.2.2.23</ecNumber>
    </recommendedName>
    <alternativeName>
        <fullName evidence="2">DNA-(apurinic or apyrimidinic site) lyase MutM</fullName>
        <shortName evidence="2">AP lyase MutM</shortName>
        <ecNumber evidence="2">4.2.99.18</ecNumber>
    </alternativeName>
</protein>
<accession>Q0VLB7</accession>
<proteinExistence type="inferred from homology"/>
<name>FPG_ALCBS</name>